<gene>
    <name type="primary">ompB</name>
</gene>
<accession>Q53047</accession>
<accession>P14914</accession>
<feature type="chain" id="PRO_0000387582" description="Outer membrane protein B">
    <location>
        <begin position="1"/>
        <end position="1654"/>
    </location>
</feature>
<feature type="chain" id="PRO_0000032657" description="120 kDa surface-exposed protein">
    <location>
        <begin position="1"/>
        <end position="1333"/>
    </location>
</feature>
<feature type="propeptide" id="PRO_0000032658" evidence="2">
    <location>
        <begin position="1334"/>
        <end position="1361"/>
    </location>
</feature>
<feature type="chain" id="PRO_0000032659" description="32 kDa beta peptide">
    <location>
        <begin position="1362"/>
        <end position="1654"/>
    </location>
</feature>
<feature type="domain" description="Autotransporter" evidence="3">
    <location>
        <begin position="1366"/>
        <end position="1654"/>
    </location>
</feature>
<protein>
    <recommendedName>
        <fullName>Outer membrane protein B</fullName>
    </recommendedName>
    <alternativeName>
        <fullName>168 kDa surface-layer protein</fullName>
    </alternativeName>
    <alternativeName>
        <fullName>Cell surface antigen 5</fullName>
        <shortName>Sca5</shortName>
    </alternativeName>
    <alternativeName>
        <fullName>Surface protein antigen</fullName>
    </alternativeName>
    <alternativeName>
        <fullName>rOmp B</fullName>
        <shortName>rOmpB</shortName>
    </alternativeName>
    <component>
        <recommendedName>
            <fullName>120 kDa surface-exposed protein</fullName>
        </recommendedName>
        <alternativeName>
            <fullName>120 kDa outer membrane protein OmpB</fullName>
        </alternativeName>
        <alternativeName>
            <fullName>Surface protein antigen</fullName>
        </alternativeName>
        <alternativeName>
            <fullName>p120</fullName>
        </alternativeName>
    </component>
    <component>
        <recommendedName>
            <fullName>32 kDa beta peptide</fullName>
        </recommendedName>
    </component>
</protein>
<name>OMPB_RICRI</name>
<comment type="function">
    <text>The 120 kDa surface-exposed protein is a major structural protein which may play a role as a rickettsial virulence factor and/or immunogen during infection.</text>
</comment>
<comment type="function">
    <text>The 32 kDa beta peptide may serve as a membrane anchor.</text>
</comment>
<comment type="subcellular location">
    <molecule>Outer membrane protein B</molecule>
    <subcellularLocation>
        <location evidence="1">Periplasm</location>
    </subcellularLocation>
</comment>
<comment type="subcellular location">
    <molecule>120 kDa surface-exposed protein</molecule>
    <subcellularLocation>
        <location>Secreted</location>
    </subcellularLocation>
    <subcellularLocation>
        <location>Cell surface</location>
    </subcellularLocation>
    <text>Surface exposed. This bacterium is covered by a S-layer with hexagonal symmetry.</text>
</comment>
<comment type="subcellular location">
    <molecule>32 kDa beta peptide</molecule>
    <subcellularLocation>
        <location evidence="4">Cell outer membrane</location>
        <topology evidence="4">Multi-pass membrane protein</topology>
    </subcellularLocation>
    <text>The cleaved C-terminal fragment (autotransporter domain) is localized in the outer membrane.</text>
</comment>
<comment type="PTM">
    <text>The N-terminus is blocked.</text>
</comment>
<comment type="similarity">
    <text evidence="4">Belongs to the rickettsiae OmpA/OmpB family.</text>
</comment>
<keyword id="KW-0998">Cell outer membrane</keyword>
<keyword id="KW-0903">Direct protein sequencing</keyword>
<keyword id="KW-0472">Membrane</keyword>
<keyword id="KW-0574">Periplasm</keyword>
<keyword id="KW-0964">Secreted</keyword>
<keyword id="KW-0812">Transmembrane</keyword>
<keyword id="KW-1134">Transmembrane beta strand</keyword>
<keyword id="KW-0843">Virulence</keyword>
<sequence length="1654" mass="168184">MAQKPNFLKKLISAGLVTASTATIVASFAGSAMGAAIQQNRTTNGAATTVDGAGFDQTAAPANVGVALNAVITANANNGINFNTPAGSFNGLLLNTANNLAVTVSEDTTLGFITNVVHNAHSFNLTLNAGKTLTITGQGVTNAQAAATKNAQNVVVQFNNGAAIDNNDLKGVGRIDFGAPASTLVFNLANPTTQKAPLILGDNAVIANGVNGTLNVTNGFIQVSNKSFATVKAINIADGQGIIFNTDANNANTLNLQAGGTTINFTGTDGTGRLVLLSKHAAATNFNITGSLGGNLKGVIEFNTVAVDGQLTANAGAANAVIGTNNGAGRAAGFVVSVDNGKVATIDGQVYAKDMVIQSANATGQVNFRHIVDVGADGTTAFKTAASKVTITQDSNFGNTDFGNLAAQIKVPNAITLTGNFTGDASNPGNTAGVITFDANGTLESASADANVAVTNNITAIEASGAGVVQLSGTHAAELRLGNAGSIFKLADGTVINGKVNQTALVGGALAAGTITLDGSATITGDIGNAGGAAALQRITLANDAKKTLTLGGANIIGAGGGTIDLQANGGTIKLTSTQNNIVVDFDLAIATDQTGVVDASSLTNAQTLTINGKIGTIGANNKTLGQFNIGSSKTVLSNGNVAINELVIGNDGAVQFAHDTYLITRTTNAAGQGKIIFNPVVNNGTTLAAGTNLGSATNPLAEINFGSKGVNVDTVLNVGEGVNLYATNITTTDANVGSFVFNAGGTNIVSGTVGGQQGNKFNTVALENGTTVKFLGNATFNGNTTIAANSTLQIGGNYTADCVASADGTGIVEFVNTGPITVTLNKQAAPVNALKQITVSGPGNVVINEIGNAGNHHGAVTDTIAFENSSLGAVVFLPRGIPFNDAGNTMPLTIKSTVGNKTAKGFDVPSVVVLGVDSVIADGQVIGDQNNIVGLGLGSDNGIIVNATTLYAGISTLNNNQGTVTLSGGVPNTPGTVYGLGTGIGASKFKQVTFTTDYNNLGNIIATNATINDGVTVTTGGIAGIGFDGKITLGSVNGNGNVRFADGILSNSTSMIGTTKANNGTVTYLGNAFVGNIGDSDTPVASVRFTGSDSGAGLQGNIYSQVIDFGTYNLGIVNSNIILGGGTTAINGKIDLVTNTLTFASGTSTWGNNTSIETTLTLANGNIGHIVILEGAQVNTTTTGTTTIKVQDNANANFSGTQTYTLIQGGARFNGTLGSPNFAVTGSNRFVNYSLIRAANQDYVITRTNNAENVVTNDIANSPFGGAPGVDQNVTTFVNATNTAAYNNLLLAKNSANSANFVGAIVTDTSAAITNVQLDLAKDIQAQLGNRLGALRYLGTPETAEMAGPEAGAISAAVAAGDEAIDNVAYGIWAKPFYTDAHQSKKGGLAGYKAKTTGVVIGLDTLANDNLMIGAAIGITKTDIKHQDYKKGDKTDVNGFSFSLYGAQQLVKNFFAQGSAIFSLNQVKNKSQRYFFDANGNMSKQIAAGHYDNMTFGGNLTVGYDYNAMQGVLVTPMAGLSYLKSSDENYKETGTTVANKQVNSKFSDRTDLIVGAKVAGSTMNITDLAVYPEVHAFVVHKVTGRLSKTQSVLDGQVTPCINQPDRTTKTSYNLGLSASIRSDAKMEYGIGYDAQISSKYTAHQGTLKVRVNF</sequence>
<dbReference type="EMBL" id="X16353">
    <property type="protein sequence ID" value="CAA34403.1"/>
    <property type="molecule type" value="Genomic_DNA"/>
</dbReference>
<dbReference type="EMBL" id="X16353">
    <property type="protein sequence ID" value="CAA34402.1"/>
    <property type="molecule type" value="Genomic_DNA"/>
</dbReference>
<dbReference type="PIR" id="S07575">
    <property type="entry name" value="S07575"/>
</dbReference>
<dbReference type="PIR" id="S18227">
    <property type="entry name" value="S18227"/>
</dbReference>
<dbReference type="RefSeq" id="WP_012151219.1">
    <property type="nucleotide sequence ID" value="NZ_CP114277.2"/>
</dbReference>
<dbReference type="SMR" id="Q53047"/>
<dbReference type="GeneID" id="79937732"/>
<dbReference type="GO" id="GO:0009279">
    <property type="term" value="C:cell outer membrane"/>
    <property type="evidence" value="ECO:0007669"/>
    <property type="project" value="UniProtKB-SubCell"/>
</dbReference>
<dbReference type="GO" id="GO:0009986">
    <property type="term" value="C:cell surface"/>
    <property type="evidence" value="ECO:0007669"/>
    <property type="project" value="UniProtKB-SubCell"/>
</dbReference>
<dbReference type="GO" id="GO:0005576">
    <property type="term" value="C:extracellular region"/>
    <property type="evidence" value="ECO:0007669"/>
    <property type="project" value="UniProtKB-SubCell"/>
</dbReference>
<dbReference type="GO" id="GO:0042597">
    <property type="term" value="C:periplasmic space"/>
    <property type="evidence" value="ECO:0007669"/>
    <property type="project" value="UniProtKB-SubCell"/>
</dbReference>
<dbReference type="Gene3D" id="2.40.128.130">
    <property type="entry name" value="Autotransporter beta-domain"/>
    <property type="match status" value="1"/>
</dbReference>
<dbReference type="InterPro" id="IPR005546">
    <property type="entry name" value="Autotransporte_beta"/>
</dbReference>
<dbReference type="InterPro" id="IPR036709">
    <property type="entry name" value="Autotransporte_beta_dom_sf"/>
</dbReference>
<dbReference type="InterPro" id="IPR006315">
    <property type="entry name" value="OM_autotransptr_brl_dom"/>
</dbReference>
<dbReference type="InterPro" id="IPR022095">
    <property type="entry name" value="OmpB_passenger_Rickettsia"/>
</dbReference>
<dbReference type="InterPro" id="IPR048195">
    <property type="entry name" value="OmpB_ricketsia"/>
</dbReference>
<dbReference type="NCBIfam" id="TIGR01414">
    <property type="entry name" value="autotrans_barl"/>
    <property type="match status" value="1"/>
</dbReference>
<dbReference type="NCBIfam" id="NF041657">
    <property type="entry name" value="ompB_ricketsia"/>
    <property type="match status" value="1"/>
</dbReference>
<dbReference type="Pfam" id="PF03797">
    <property type="entry name" value="Autotransporter"/>
    <property type="match status" value="1"/>
</dbReference>
<dbReference type="Pfam" id="PF12334">
    <property type="entry name" value="rOmpB_passenger"/>
    <property type="match status" value="1"/>
</dbReference>
<dbReference type="SMART" id="SM00869">
    <property type="entry name" value="Autotransporter"/>
    <property type="match status" value="1"/>
</dbReference>
<dbReference type="SUPFAM" id="SSF103515">
    <property type="entry name" value="Autotransporter"/>
    <property type="match status" value="1"/>
</dbReference>
<dbReference type="PROSITE" id="PS51208">
    <property type="entry name" value="AUTOTRANSPORTER"/>
    <property type="match status" value="1"/>
</dbReference>
<proteinExistence type="evidence at protein level"/>
<evidence type="ECO:0000250" key="1"/>
<evidence type="ECO:0000255" key="2"/>
<evidence type="ECO:0000255" key="3">
    <source>
        <dbReference type="PROSITE-ProRule" id="PRU00556"/>
    </source>
</evidence>
<evidence type="ECO:0000305" key="4"/>
<reference key="1">
    <citation type="journal article" date="1991" name="Mol. Microbiol.">
        <title>The 120 kilodalton outer membrane protein (rOmp B) of Rickettsia rickettsii is encoded by an unusually long open reading frame: evidence for protein processing from a large precursor.</title>
        <authorList>
            <person name="Gilmore R.D. Jr."/>
            <person name="Cieplak W. Jr."/>
            <person name="Policastro P.F."/>
            <person name="Hackstadt T."/>
        </authorList>
    </citation>
    <scope>NUCLEOTIDE SEQUENCE [GENOMIC DNA]</scope>
    <scope>PARTIAL PROTEIN SEQUENCE (N-TERMINAL OF THE 32 KDA BETA PEPTIDE)</scope>
    <source>
        <strain>R</strain>
    </source>
</reference>
<reference key="2">
    <citation type="journal article" date="1989" name="Mol. Microbiol.">
        <title>Cloning, expression and sequence analysis of the gene encoding the 120 kD surface-exposed protein of Rickettsia rickettsii.</title>
        <authorList>
            <person name="Gilmore R.D. Jr."/>
            <person name="Joste N."/>
            <person name="McDonald G.A."/>
        </authorList>
    </citation>
    <scope>NUCLEOTIDE SEQUENCE [GENOMIC DNA] OF 355-1654</scope>
    <source>
        <strain>R</strain>
    </source>
</reference>
<reference key="3">
    <citation type="journal article" date="1991" name="Mol. Microbiol.">
        <authorList>
            <person name="Gilmore R.D. Jr."/>
            <person name="Joste N."/>
            <person name="McDonald G.A."/>
        </authorList>
    </citation>
    <scope>ERRATUM OF PUBMED:2515418</scope>
    <scope>SEQUENCE REVISION TO 1348-1358</scope>
</reference>
<reference key="4">
    <citation type="journal article" date="1992" name="Infect. Immun.">
        <title>Evidence for proteolytic cleavage of the 120-kilodalton outer membrane protein of rickettsiae: identification of an avirulent mutant deficient in processing.</title>
        <authorList>
            <person name="Hackstadt T."/>
            <person name="Messer R."/>
            <person name="Cieplak W. Jr."/>
            <person name="Peacock M.G."/>
        </authorList>
    </citation>
    <scope>PROTEIN SEQUENCE OF 1362-1380</scope>
    <scope>CLEAVAGE SITE</scope>
    <source>
        <strain>R</strain>
    </source>
</reference>
<organism>
    <name type="scientific">Rickettsia rickettsii</name>
    <dbReference type="NCBI Taxonomy" id="783"/>
    <lineage>
        <taxon>Bacteria</taxon>
        <taxon>Pseudomonadati</taxon>
        <taxon>Pseudomonadota</taxon>
        <taxon>Alphaproteobacteria</taxon>
        <taxon>Rickettsiales</taxon>
        <taxon>Rickettsiaceae</taxon>
        <taxon>Rickettsieae</taxon>
        <taxon>Rickettsia</taxon>
        <taxon>spotted fever group</taxon>
    </lineage>
</organism>